<organism>
    <name type="scientific">Schizosaccharomyces pombe (strain 972 / ATCC 24843)</name>
    <name type="common">Fission yeast</name>
    <dbReference type="NCBI Taxonomy" id="284812"/>
    <lineage>
        <taxon>Eukaryota</taxon>
        <taxon>Fungi</taxon>
        <taxon>Dikarya</taxon>
        <taxon>Ascomycota</taxon>
        <taxon>Taphrinomycotina</taxon>
        <taxon>Schizosaccharomycetes</taxon>
        <taxon>Schizosaccharomycetales</taxon>
        <taxon>Schizosaccharomycetaceae</taxon>
        <taxon>Schizosaccharomyces</taxon>
    </lineage>
</organism>
<accession>Q09173</accession>
<feature type="chain" id="PRO_0000057772" description="Protein phosphatase 2C homolog 3">
    <location>
        <begin position="1"/>
        <end position="414"/>
    </location>
</feature>
<feature type="domain" description="PPM-type phosphatase" evidence="3">
    <location>
        <begin position="23"/>
        <end position="288"/>
    </location>
</feature>
<feature type="region of interest" description="Disordered" evidence="4">
    <location>
        <begin position="313"/>
        <end position="368"/>
    </location>
</feature>
<feature type="region of interest" description="Disordered" evidence="4">
    <location>
        <begin position="380"/>
        <end position="414"/>
    </location>
</feature>
<feature type="compositionally biased region" description="Basic and acidic residues" evidence="4">
    <location>
        <begin position="350"/>
        <end position="363"/>
    </location>
</feature>
<feature type="compositionally biased region" description="Polar residues" evidence="4">
    <location>
        <begin position="390"/>
        <end position="400"/>
    </location>
</feature>
<feature type="compositionally biased region" description="Basic and acidic residues" evidence="4">
    <location>
        <begin position="401"/>
        <end position="414"/>
    </location>
</feature>
<feature type="binding site" evidence="2">
    <location>
        <position position="62"/>
    </location>
    <ligand>
        <name>Mn(2+)</name>
        <dbReference type="ChEBI" id="CHEBI:29035"/>
        <label>1</label>
    </ligand>
</feature>
<feature type="binding site" evidence="2">
    <location>
        <position position="62"/>
    </location>
    <ligand>
        <name>Mn(2+)</name>
        <dbReference type="ChEBI" id="CHEBI:29035"/>
        <label>2</label>
    </ligand>
</feature>
<feature type="binding site" evidence="2">
    <location>
        <position position="63"/>
    </location>
    <ligand>
        <name>Mn(2+)</name>
        <dbReference type="ChEBI" id="CHEBI:29035"/>
        <label>1</label>
    </ligand>
</feature>
<feature type="binding site" evidence="2">
    <location>
        <position position="230"/>
    </location>
    <ligand>
        <name>Mn(2+)</name>
        <dbReference type="ChEBI" id="CHEBI:29035"/>
        <label>2</label>
    </ligand>
</feature>
<feature type="binding site" evidence="2">
    <location>
        <position position="279"/>
    </location>
    <ligand>
        <name>Mn(2+)</name>
        <dbReference type="ChEBI" id="CHEBI:29035"/>
        <label>2</label>
    </ligand>
</feature>
<feature type="sequence conflict" description="In Ref. 1; AAA67321." evidence="7" ref="1">
    <original>K</original>
    <variation>T</variation>
    <location>
        <position position="196"/>
    </location>
</feature>
<comment type="function">
    <text evidence="1 5">Dephosphorylating regulator for many key proteins (By similarity). Has an important role in osmotic stability and cell shape control. It may negatively regulate the osmosensing signal transmitted through wis1 map kinase (PubMed:7859738).</text>
</comment>
<comment type="catalytic activity">
    <reaction evidence="8">
        <text>O-phospho-L-seryl-[protein] + H2O = L-seryl-[protein] + phosphate</text>
        <dbReference type="Rhea" id="RHEA:20629"/>
        <dbReference type="Rhea" id="RHEA-COMP:9863"/>
        <dbReference type="Rhea" id="RHEA-COMP:11604"/>
        <dbReference type="ChEBI" id="CHEBI:15377"/>
        <dbReference type="ChEBI" id="CHEBI:29999"/>
        <dbReference type="ChEBI" id="CHEBI:43474"/>
        <dbReference type="ChEBI" id="CHEBI:83421"/>
        <dbReference type="EC" id="3.1.3.16"/>
    </reaction>
    <physiologicalReaction direction="left-to-right" evidence="8">
        <dbReference type="Rhea" id="RHEA:20630"/>
    </physiologicalReaction>
</comment>
<comment type="catalytic activity">
    <reaction evidence="8">
        <text>O-phospho-L-threonyl-[protein] + H2O = L-threonyl-[protein] + phosphate</text>
        <dbReference type="Rhea" id="RHEA:47004"/>
        <dbReference type="Rhea" id="RHEA-COMP:11060"/>
        <dbReference type="Rhea" id="RHEA-COMP:11605"/>
        <dbReference type="ChEBI" id="CHEBI:15377"/>
        <dbReference type="ChEBI" id="CHEBI:30013"/>
        <dbReference type="ChEBI" id="CHEBI:43474"/>
        <dbReference type="ChEBI" id="CHEBI:61977"/>
        <dbReference type="EC" id="3.1.3.16"/>
    </reaction>
    <physiologicalReaction direction="left-to-right" evidence="8">
        <dbReference type="Rhea" id="RHEA:47005"/>
    </physiologicalReaction>
</comment>
<comment type="cofactor">
    <cofactor evidence="2">
        <name>Mg(2+)</name>
        <dbReference type="ChEBI" id="CHEBI:18420"/>
    </cofactor>
    <cofactor evidence="2">
        <name>Mn(2+)</name>
        <dbReference type="ChEBI" id="CHEBI:29035"/>
    </cofactor>
    <text evidence="3">Binds 2 magnesium or manganese ions per subunit.</text>
</comment>
<comment type="subunit">
    <text>Monomer.</text>
</comment>
<comment type="subcellular location">
    <subcellularLocation>
        <location evidence="1">Cytoplasm</location>
    </subcellularLocation>
    <subcellularLocation>
        <location evidence="1">Nucleus</location>
    </subcellularLocation>
</comment>
<comment type="similarity">
    <text evidence="7">Belongs to the PP2C family.</text>
</comment>
<proteinExistence type="evidence at protein level"/>
<dbReference type="EC" id="3.1.3.16" evidence="6"/>
<dbReference type="EMBL" id="L34882">
    <property type="protein sequence ID" value="AAA67321.1"/>
    <property type="molecule type" value="Genomic_DNA"/>
</dbReference>
<dbReference type="EMBL" id="CU329670">
    <property type="protein sequence ID" value="CAA91172.1"/>
    <property type="molecule type" value="Genomic_DNA"/>
</dbReference>
<dbReference type="PIR" id="T38573">
    <property type="entry name" value="S62462"/>
</dbReference>
<dbReference type="RefSeq" id="NP_593087.1">
    <property type="nucleotide sequence ID" value="NM_001018485.2"/>
</dbReference>
<dbReference type="SMR" id="Q09173"/>
<dbReference type="BioGRID" id="278491">
    <property type="interactions" value="55"/>
</dbReference>
<dbReference type="FunCoup" id="Q09173">
    <property type="interactions" value="927"/>
</dbReference>
<dbReference type="STRING" id="284812.Q09173"/>
<dbReference type="iPTMnet" id="Q09173"/>
<dbReference type="PaxDb" id="4896-SPAC2G11.07c.1"/>
<dbReference type="EnsemblFungi" id="SPAC2G11.07c.1">
    <property type="protein sequence ID" value="SPAC2G11.07c.1:pep"/>
    <property type="gene ID" value="SPAC2G11.07c"/>
</dbReference>
<dbReference type="GeneID" id="2542008"/>
<dbReference type="KEGG" id="spo:2542008"/>
<dbReference type="PomBase" id="SPAC2G11.07c">
    <property type="gene designation" value="ptc3"/>
</dbReference>
<dbReference type="VEuPathDB" id="FungiDB:SPAC2G11.07c"/>
<dbReference type="eggNOG" id="KOG0698">
    <property type="taxonomic scope" value="Eukaryota"/>
</dbReference>
<dbReference type="HOGENOM" id="CLU_013173_4_3_1"/>
<dbReference type="InParanoid" id="Q09173"/>
<dbReference type="OMA" id="CLLHDRP"/>
<dbReference type="PhylomeDB" id="Q09173"/>
<dbReference type="PRO" id="PR:Q09173"/>
<dbReference type="Proteomes" id="UP000002485">
    <property type="component" value="Chromosome I"/>
</dbReference>
<dbReference type="GO" id="GO:0005829">
    <property type="term" value="C:cytosol"/>
    <property type="evidence" value="ECO:0007005"/>
    <property type="project" value="PomBase"/>
</dbReference>
<dbReference type="GO" id="GO:0005634">
    <property type="term" value="C:nucleus"/>
    <property type="evidence" value="ECO:0007005"/>
    <property type="project" value="PomBase"/>
</dbReference>
<dbReference type="GO" id="GO:1990439">
    <property type="term" value="F:MAP kinase serine/threonine phosphatase activity"/>
    <property type="evidence" value="ECO:0000314"/>
    <property type="project" value="PomBase"/>
</dbReference>
<dbReference type="GO" id="GO:0046872">
    <property type="term" value="F:metal ion binding"/>
    <property type="evidence" value="ECO:0007669"/>
    <property type="project" value="UniProtKB-KW"/>
</dbReference>
<dbReference type="GO" id="GO:0004722">
    <property type="term" value="F:protein serine/threonine phosphatase activity"/>
    <property type="evidence" value="ECO:0000314"/>
    <property type="project" value="UniProtKB"/>
</dbReference>
<dbReference type="GO" id="GO:0071470">
    <property type="term" value="P:cellular response to osmotic stress"/>
    <property type="evidence" value="ECO:0000315"/>
    <property type="project" value="PomBase"/>
</dbReference>
<dbReference type="GO" id="GO:1903753">
    <property type="term" value="P:negative regulation of p38MAPK cascade"/>
    <property type="evidence" value="ECO:0000315"/>
    <property type="project" value="PomBase"/>
</dbReference>
<dbReference type="GO" id="GO:0007165">
    <property type="term" value="P:signal transduction"/>
    <property type="evidence" value="ECO:0000318"/>
    <property type="project" value="GO_Central"/>
</dbReference>
<dbReference type="CDD" id="cd00143">
    <property type="entry name" value="PP2Cc"/>
    <property type="match status" value="1"/>
</dbReference>
<dbReference type="FunFam" id="3.60.40.10:FF:000016">
    <property type="entry name" value="Protein phosphatase 2C"/>
    <property type="match status" value="1"/>
</dbReference>
<dbReference type="Gene3D" id="3.60.40.10">
    <property type="entry name" value="PPM-type phosphatase domain"/>
    <property type="match status" value="1"/>
</dbReference>
<dbReference type="InterPro" id="IPR015655">
    <property type="entry name" value="PP2C"/>
</dbReference>
<dbReference type="InterPro" id="IPR000222">
    <property type="entry name" value="PP2C_BS"/>
</dbReference>
<dbReference type="InterPro" id="IPR036457">
    <property type="entry name" value="PPM-type-like_dom_sf"/>
</dbReference>
<dbReference type="InterPro" id="IPR001932">
    <property type="entry name" value="PPM-type_phosphatase-like_dom"/>
</dbReference>
<dbReference type="PANTHER" id="PTHR13832">
    <property type="entry name" value="PROTEIN PHOSPHATASE 2C"/>
    <property type="match status" value="1"/>
</dbReference>
<dbReference type="PANTHER" id="PTHR13832:SF816">
    <property type="entry name" value="PROTEIN PHOSPHATASE 2C HOMOLOG 3"/>
    <property type="match status" value="1"/>
</dbReference>
<dbReference type="Pfam" id="PF00481">
    <property type="entry name" value="PP2C"/>
    <property type="match status" value="1"/>
</dbReference>
<dbReference type="SMART" id="SM00332">
    <property type="entry name" value="PP2Cc"/>
    <property type="match status" value="1"/>
</dbReference>
<dbReference type="SUPFAM" id="SSF81606">
    <property type="entry name" value="PP2C-like"/>
    <property type="match status" value="1"/>
</dbReference>
<dbReference type="PROSITE" id="PS01032">
    <property type="entry name" value="PPM_1"/>
    <property type="match status" value="1"/>
</dbReference>
<dbReference type="PROSITE" id="PS51746">
    <property type="entry name" value="PPM_2"/>
    <property type="match status" value="1"/>
</dbReference>
<keyword id="KW-0963">Cytoplasm</keyword>
<keyword id="KW-0378">Hydrolase</keyword>
<keyword id="KW-0460">Magnesium</keyword>
<keyword id="KW-0464">Manganese</keyword>
<keyword id="KW-0479">Metal-binding</keyword>
<keyword id="KW-0539">Nucleus</keyword>
<keyword id="KW-0904">Protein phosphatase</keyword>
<keyword id="KW-1185">Reference proteome</keyword>
<name>PP2C3_SCHPO</name>
<evidence type="ECO:0000250" key="1">
    <source>
        <dbReference type="UniProtKB" id="P34221"/>
    </source>
</evidence>
<evidence type="ECO:0000250" key="2">
    <source>
        <dbReference type="UniProtKB" id="P35813"/>
    </source>
</evidence>
<evidence type="ECO:0000255" key="3">
    <source>
        <dbReference type="PROSITE-ProRule" id="PRU01082"/>
    </source>
</evidence>
<evidence type="ECO:0000256" key="4">
    <source>
        <dbReference type="SAM" id="MobiDB-lite"/>
    </source>
</evidence>
<evidence type="ECO:0000269" key="5">
    <source>
    </source>
</evidence>
<evidence type="ECO:0000269" key="6">
    <source>
    </source>
</evidence>
<evidence type="ECO:0000305" key="7"/>
<evidence type="ECO:0000305" key="8">
    <source>
    </source>
</evidence>
<protein>
    <recommendedName>
        <fullName>Protein phosphatase 2C homolog 3</fullName>
        <shortName>PP2C-3</shortName>
        <ecNumber evidence="6">3.1.3.16</ecNumber>
    </recommendedName>
</protein>
<sequence length="414" mass="44857">MGQTLSEPVTEKHSVNGSNEFVLYGLSSMQGWRISMEDAHSAILSMECSAVKDPVDFFAVYDGHGGDKVAKWCGSNLPQILEKNPDFQKGDFVNALKSSFLNADKAILDDDQFHTDPSGCTATVVLRVGNKLYCANAGDSRTVLGSKGIAKPLSADHKPSNEAEKARICAAGGFVDFGRVNGNLALSRAIGDFEFKNSNLEPEKQIVTALPDVVVHEITDDDEFVVLACDGIWDCKTSQQVIEFVRRGIVAGTSLEKIAENLMDNCIASDTETTGLGCDNMTVCIVALLQENDKSAWYKKIADRVAANDGPCAPPEYAENHGPGWRSGDNNKKVIVPPNFHQVKLNGSDGYDKDANENSKEDDSTNGSLAAGFRWKEHFFPHKAEEENSSSETDIVNSNKDVADDHKEAVSAAD</sequence>
<reference key="1">
    <citation type="journal article" date="1995" name="EMBO J.">
        <title>Counteractive roles of protein phosphatase 2C (PP2C) and a MAP kinase kinase homolog in the osmoregulation of fission yeast.</title>
        <authorList>
            <person name="Shiozaki K."/>
            <person name="Russell P."/>
        </authorList>
    </citation>
    <scope>NUCLEOTIDE SEQUENCE [GENOMIC DNA]</scope>
    <scope>FUNCTION</scope>
    <source>
        <strain>972 / ATCC 24843</strain>
    </source>
</reference>
<reference key="2">
    <citation type="journal article" date="2002" name="Nature">
        <title>The genome sequence of Schizosaccharomyces pombe.</title>
        <authorList>
            <person name="Wood V."/>
            <person name="Gwilliam R."/>
            <person name="Rajandream M.A."/>
            <person name="Lyne M.H."/>
            <person name="Lyne R."/>
            <person name="Stewart A."/>
            <person name="Sgouros J.G."/>
            <person name="Peat N."/>
            <person name="Hayles J."/>
            <person name="Baker S.G."/>
            <person name="Basham D."/>
            <person name="Bowman S."/>
            <person name="Brooks K."/>
            <person name="Brown D."/>
            <person name="Brown S."/>
            <person name="Chillingworth T."/>
            <person name="Churcher C.M."/>
            <person name="Collins M."/>
            <person name="Connor R."/>
            <person name="Cronin A."/>
            <person name="Davis P."/>
            <person name="Feltwell T."/>
            <person name="Fraser A."/>
            <person name="Gentles S."/>
            <person name="Goble A."/>
            <person name="Hamlin N."/>
            <person name="Harris D.E."/>
            <person name="Hidalgo J."/>
            <person name="Hodgson G."/>
            <person name="Holroyd S."/>
            <person name="Hornsby T."/>
            <person name="Howarth S."/>
            <person name="Huckle E.J."/>
            <person name="Hunt S."/>
            <person name="Jagels K."/>
            <person name="James K.D."/>
            <person name="Jones L."/>
            <person name="Jones M."/>
            <person name="Leather S."/>
            <person name="McDonald S."/>
            <person name="McLean J."/>
            <person name="Mooney P."/>
            <person name="Moule S."/>
            <person name="Mungall K.L."/>
            <person name="Murphy L.D."/>
            <person name="Niblett D."/>
            <person name="Odell C."/>
            <person name="Oliver K."/>
            <person name="O'Neil S."/>
            <person name="Pearson D."/>
            <person name="Quail M.A."/>
            <person name="Rabbinowitsch E."/>
            <person name="Rutherford K.M."/>
            <person name="Rutter S."/>
            <person name="Saunders D."/>
            <person name="Seeger K."/>
            <person name="Sharp S."/>
            <person name="Skelton J."/>
            <person name="Simmonds M.N."/>
            <person name="Squares R."/>
            <person name="Squares S."/>
            <person name="Stevens K."/>
            <person name="Taylor K."/>
            <person name="Taylor R.G."/>
            <person name="Tivey A."/>
            <person name="Walsh S.V."/>
            <person name="Warren T."/>
            <person name="Whitehead S."/>
            <person name="Woodward J.R."/>
            <person name="Volckaert G."/>
            <person name="Aert R."/>
            <person name="Robben J."/>
            <person name="Grymonprez B."/>
            <person name="Weltjens I."/>
            <person name="Vanstreels E."/>
            <person name="Rieger M."/>
            <person name="Schaefer M."/>
            <person name="Mueller-Auer S."/>
            <person name="Gabel C."/>
            <person name="Fuchs M."/>
            <person name="Duesterhoeft A."/>
            <person name="Fritzc C."/>
            <person name="Holzer E."/>
            <person name="Moestl D."/>
            <person name="Hilbert H."/>
            <person name="Borzym K."/>
            <person name="Langer I."/>
            <person name="Beck A."/>
            <person name="Lehrach H."/>
            <person name="Reinhardt R."/>
            <person name="Pohl T.M."/>
            <person name="Eger P."/>
            <person name="Zimmermann W."/>
            <person name="Wedler H."/>
            <person name="Wambutt R."/>
            <person name="Purnelle B."/>
            <person name="Goffeau A."/>
            <person name="Cadieu E."/>
            <person name="Dreano S."/>
            <person name="Gloux S."/>
            <person name="Lelaure V."/>
            <person name="Mottier S."/>
            <person name="Galibert F."/>
            <person name="Aves S.J."/>
            <person name="Xiang Z."/>
            <person name="Hunt C."/>
            <person name="Moore K."/>
            <person name="Hurst S.M."/>
            <person name="Lucas M."/>
            <person name="Rochet M."/>
            <person name="Gaillardin C."/>
            <person name="Tallada V.A."/>
            <person name="Garzon A."/>
            <person name="Thode G."/>
            <person name="Daga R.R."/>
            <person name="Cruzado L."/>
            <person name="Jimenez J."/>
            <person name="Sanchez M."/>
            <person name="del Rey F."/>
            <person name="Benito J."/>
            <person name="Dominguez A."/>
            <person name="Revuelta J.L."/>
            <person name="Moreno S."/>
            <person name="Armstrong J."/>
            <person name="Forsburg S.L."/>
            <person name="Cerutti L."/>
            <person name="Lowe T."/>
            <person name="McCombie W.R."/>
            <person name="Paulsen I."/>
            <person name="Potashkin J."/>
            <person name="Shpakovski G.V."/>
            <person name="Ussery D."/>
            <person name="Barrell B.G."/>
            <person name="Nurse P."/>
        </authorList>
    </citation>
    <scope>NUCLEOTIDE SEQUENCE [LARGE SCALE GENOMIC DNA]</scope>
    <source>
        <strain>972 / ATCC 24843</strain>
    </source>
</reference>
<reference key="3">
    <citation type="journal article" date="1998" name="Biochem. Biophys. Res. Commun.">
        <title>Isoform-specific phosphorylation of fission yeast type 2C protein phosphatase.</title>
        <authorList>
            <person name="Kobayashi T."/>
            <person name="Sadaie M."/>
            <person name="Ohnishi M."/>
            <person name="Wang H."/>
            <person name="Ikeda S."/>
            <person name="Hanada M."/>
            <person name="Yanagawa Y."/>
            <person name="Nakajima T."/>
            <person name="Tamura S."/>
        </authorList>
    </citation>
    <scope>CATALYTIC ACTIVITY</scope>
</reference>
<gene>
    <name type="primary">ptc3</name>
    <name type="ORF">SPAC2G11.07c</name>
</gene>